<comment type="function">
    <text evidence="2 4 5">Catalyzes the cleavage of glutathione into 5-oxo-L-proline and a Cys-Gly dipeptide. Acts specifically on glutathione, but not on other gamma-glutamyl peptides. Glutathione depletion is an important factor for apoptosis initiation and execution. Acts as a pro-apoptotic component of the unfolded protein response pathway by mediating the pro-apoptotic effects of the ATF4-ATF3-DDIT3/CHOP cascade (By similarity). Negative regulator of Notch signaling pathway involved in embryonic neurogenesis: acts by inhibiting Notch cleavage by furin, maintaining Notch in an immature inactive form, thereby promoting neurogenesis in embryos (PubMed:22445366).</text>
</comment>
<comment type="catalytic activity">
    <reaction evidence="5">
        <text>glutathione = L-cysteinylglycine + 5-oxo-L-proline</text>
        <dbReference type="Rhea" id="RHEA:47724"/>
        <dbReference type="ChEBI" id="CHEBI:57925"/>
        <dbReference type="ChEBI" id="CHEBI:58402"/>
        <dbReference type="ChEBI" id="CHEBI:61694"/>
        <dbReference type="EC" id="4.3.2.7"/>
    </reaction>
</comment>
<comment type="biophysicochemical properties">
    <kinetics>
        <KM evidence="5">3.13 mM for glutathione</KM>
        <Vmax evidence="5">980.0 umol/h/mg enzyme</Vmax>
    </kinetics>
</comment>
<comment type="subunit">
    <text evidence="4">Interacts with NOTCH1 (via extracellular region).</text>
</comment>
<comment type="subcellular location">
    <subcellularLocation>
        <location evidence="2">Cytoplasm</location>
        <location evidence="2">Cytosol</location>
    </subcellularLocation>
    <subcellularLocation>
        <location evidence="4">Golgi apparatus</location>
        <location evidence="4">trans-Golgi network</location>
    </subcellularLocation>
</comment>
<comment type="tissue specificity">
    <text evidence="4">Widely expressed, with high expression in forebrain and anterior spinal cord. Expressed at intermediate level in the dorsal aorta and heart. Present throughout adult brain (at protein level).</text>
</comment>
<comment type="similarity">
    <text evidence="8">Belongs to the gamma-glutamylcyclotransferase family. ChaC subfamily.</text>
</comment>
<reference key="1">
    <citation type="journal article" date="2005" name="Science">
        <title>The transcriptional landscape of the mammalian genome.</title>
        <authorList>
            <person name="Carninci P."/>
            <person name="Kasukawa T."/>
            <person name="Katayama S."/>
            <person name="Gough J."/>
            <person name="Frith M.C."/>
            <person name="Maeda N."/>
            <person name="Oyama R."/>
            <person name="Ravasi T."/>
            <person name="Lenhard B."/>
            <person name="Wells C."/>
            <person name="Kodzius R."/>
            <person name="Shimokawa K."/>
            <person name="Bajic V.B."/>
            <person name="Brenner S.E."/>
            <person name="Batalov S."/>
            <person name="Forrest A.R."/>
            <person name="Zavolan M."/>
            <person name="Davis M.J."/>
            <person name="Wilming L.G."/>
            <person name="Aidinis V."/>
            <person name="Allen J.E."/>
            <person name="Ambesi-Impiombato A."/>
            <person name="Apweiler R."/>
            <person name="Aturaliya R.N."/>
            <person name="Bailey T.L."/>
            <person name="Bansal M."/>
            <person name="Baxter L."/>
            <person name="Beisel K.W."/>
            <person name="Bersano T."/>
            <person name="Bono H."/>
            <person name="Chalk A.M."/>
            <person name="Chiu K.P."/>
            <person name="Choudhary V."/>
            <person name="Christoffels A."/>
            <person name="Clutterbuck D.R."/>
            <person name="Crowe M.L."/>
            <person name="Dalla E."/>
            <person name="Dalrymple B.P."/>
            <person name="de Bono B."/>
            <person name="Della Gatta G."/>
            <person name="di Bernardo D."/>
            <person name="Down T."/>
            <person name="Engstrom P."/>
            <person name="Fagiolini M."/>
            <person name="Faulkner G."/>
            <person name="Fletcher C.F."/>
            <person name="Fukushima T."/>
            <person name="Furuno M."/>
            <person name="Futaki S."/>
            <person name="Gariboldi M."/>
            <person name="Georgii-Hemming P."/>
            <person name="Gingeras T.R."/>
            <person name="Gojobori T."/>
            <person name="Green R.E."/>
            <person name="Gustincich S."/>
            <person name="Harbers M."/>
            <person name="Hayashi Y."/>
            <person name="Hensch T.K."/>
            <person name="Hirokawa N."/>
            <person name="Hill D."/>
            <person name="Huminiecki L."/>
            <person name="Iacono M."/>
            <person name="Ikeo K."/>
            <person name="Iwama A."/>
            <person name="Ishikawa T."/>
            <person name="Jakt M."/>
            <person name="Kanapin A."/>
            <person name="Katoh M."/>
            <person name="Kawasawa Y."/>
            <person name="Kelso J."/>
            <person name="Kitamura H."/>
            <person name="Kitano H."/>
            <person name="Kollias G."/>
            <person name="Krishnan S.P."/>
            <person name="Kruger A."/>
            <person name="Kummerfeld S.K."/>
            <person name="Kurochkin I.V."/>
            <person name="Lareau L.F."/>
            <person name="Lazarevic D."/>
            <person name="Lipovich L."/>
            <person name="Liu J."/>
            <person name="Liuni S."/>
            <person name="McWilliam S."/>
            <person name="Madan Babu M."/>
            <person name="Madera M."/>
            <person name="Marchionni L."/>
            <person name="Matsuda H."/>
            <person name="Matsuzawa S."/>
            <person name="Miki H."/>
            <person name="Mignone F."/>
            <person name="Miyake S."/>
            <person name="Morris K."/>
            <person name="Mottagui-Tabar S."/>
            <person name="Mulder N."/>
            <person name="Nakano N."/>
            <person name="Nakauchi H."/>
            <person name="Ng P."/>
            <person name="Nilsson R."/>
            <person name="Nishiguchi S."/>
            <person name="Nishikawa S."/>
            <person name="Nori F."/>
            <person name="Ohara O."/>
            <person name="Okazaki Y."/>
            <person name="Orlando V."/>
            <person name="Pang K.C."/>
            <person name="Pavan W.J."/>
            <person name="Pavesi G."/>
            <person name="Pesole G."/>
            <person name="Petrovsky N."/>
            <person name="Piazza S."/>
            <person name="Reed J."/>
            <person name="Reid J.F."/>
            <person name="Ring B.Z."/>
            <person name="Ringwald M."/>
            <person name="Rost B."/>
            <person name="Ruan Y."/>
            <person name="Salzberg S.L."/>
            <person name="Sandelin A."/>
            <person name="Schneider C."/>
            <person name="Schoenbach C."/>
            <person name="Sekiguchi K."/>
            <person name="Semple C.A."/>
            <person name="Seno S."/>
            <person name="Sessa L."/>
            <person name="Sheng Y."/>
            <person name="Shibata Y."/>
            <person name="Shimada H."/>
            <person name="Shimada K."/>
            <person name="Silva D."/>
            <person name="Sinclair B."/>
            <person name="Sperling S."/>
            <person name="Stupka E."/>
            <person name="Sugiura K."/>
            <person name="Sultana R."/>
            <person name="Takenaka Y."/>
            <person name="Taki K."/>
            <person name="Tammoja K."/>
            <person name="Tan S.L."/>
            <person name="Tang S."/>
            <person name="Taylor M.S."/>
            <person name="Tegner J."/>
            <person name="Teichmann S.A."/>
            <person name="Ueda H.R."/>
            <person name="van Nimwegen E."/>
            <person name="Verardo R."/>
            <person name="Wei C.L."/>
            <person name="Yagi K."/>
            <person name="Yamanishi H."/>
            <person name="Zabarovsky E."/>
            <person name="Zhu S."/>
            <person name="Zimmer A."/>
            <person name="Hide W."/>
            <person name="Bult C."/>
            <person name="Grimmond S.M."/>
            <person name="Teasdale R.D."/>
            <person name="Liu E.T."/>
            <person name="Brusic V."/>
            <person name="Quackenbush J."/>
            <person name="Wahlestedt C."/>
            <person name="Mattick J.S."/>
            <person name="Hume D.A."/>
            <person name="Kai C."/>
            <person name="Sasaki D."/>
            <person name="Tomaru Y."/>
            <person name="Fukuda S."/>
            <person name="Kanamori-Katayama M."/>
            <person name="Suzuki M."/>
            <person name="Aoki J."/>
            <person name="Arakawa T."/>
            <person name="Iida J."/>
            <person name="Imamura K."/>
            <person name="Itoh M."/>
            <person name="Kato T."/>
            <person name="Kawaji H."/>
            <person name="Kawagashira N."/>
            <person name="Kawashima T."/>
            <person name="Kojima M."/>
            <person name="Kondo S."/>
            <person name="Konno H."/>
            <person name="Nakano K."/>
            <person name="Ninomiya N."/>
            <person name="Nishio T."/>
            <person name="Okada M."/>
            <person name="Plessy C."/>
            <person name="Shibata K."/>
            <person name="Shiraki T."/>
            <person name="Suzuki S."/>
            <person name="Tagami M."/>
            <person name="Waki K."/>
            <person name="Watahiki A."/>
            <person name="Okamura-Oho Y."/>
            <person name="Suzuki H."/>
            <person name="Kawai J."/>
            <person name="Hayashizaki Y."/>
        </authorList>
    </citation>
    <scope>NUCLEOTIDE SEQUENCE [LARGE SCALE MRNA]</scope>
    <source>
        <strain>C57BL/6J</strain>
        <tissue>Olfactory bulb</tissue>
        <tissue>Pancreas</tissue>
    </source>
</reference>
<reference key="2">
    <citation type="journal article" date="2009" name="PLoS Biol.">
        <title>Lineage-specific biology revealed by a finished genome assembly of the mouse.</title>
        <authorList>
            <person name="Church D.M."/>
            <person name="Goodstadt L."/>
            <person name="Hillier L.W."/>
            <person name="Zody M.C."/>
            <person name="Goldstein S."/>
            <person name="She X."/>
            <person name="Bult C.J."/>
            <person name="Agarwala R."/>
            <person name="Cherry J.L."/>
            <person name="DiCuccio M."/>
            <person name="Hlavina W."/>
            <person name="Kapustin Y."/>
            <person name="Meric P."/>
            <person name="Maglott D."/>
            <person name="Birtle Z."/>
            <person name="Marques A.C."/>
            <person name="Graves T."/>
            <person name="Zhou S."/>
            <person name="Teague B."/>
            <person name="Potamousis K."/>
            <person name="Churas C."/>
            <person name="Place M."/>
            <person name="Herschleb J."/>
            <person name="Runnheim R."/>
            <person name="Forrest D."/>
            <person name="Amos-Landgraf J."/>
            <person name="Schwartz D.C."/>
            <person name="Cheng Z."/>
            <person name="Lindblad-Toh K."/>
            <person name="Eichler E.E."/>
            <person name="Ponting C.P."/>
        </authorList>
    </citation>
    <scope>NUCLEOTIDE SEQUENCE [LARGE SCALE GENOMIC DNA]</scope>
    <source>
        <strain>C57BL/6J</strain>
    </source>
</reference>
<reference key="3">
    <citation type="journal article" date="2004" name="Genome Res.">
        <title>The status, quality, and expansion of the NIH full-length cDNA project: the Mammalian Gene Collection (MGC).</title>
        <authorList>
            <consortium name="The MGC Project Team"/>
        </authorList>
    </citation>
    <scope>NUCLEOTIDE SEQUENCE [LARGE SCALE MRNA]</scope>
    <source>
        <strain>FVB/N</strain>
        <tissue>Mammary tumor</tissue>
    </source>
</reference>
<reference key="4">
    <citation type="journal article" date="2012" name="Dev. Cell">
        <title>Botch promotes neurogenesis by antagonizing Notch.</title>
        <authorList>
            <person name="Chi Z."/>
            <person name="Zhang J."/>
            <person name="Tokunaga A."/>
            <person name="Harraz M.M."/>
            <person name="Byrne S.T."/>
            <person name="Dolinko A."/>
            <person name="Xu J."/>
            <person name="Blackshaw S."/>
            <person name="Gaiano N."/>
            <person name="Dawson T.M."/>
            <person name="Dawson V.L."/>
        </authorList>
    </citation>
    <scope>FUNCTION</scope>
    <scope>SUBCELLULAR LOCATION</scope>
    <scope>TISSUE SPECIFICITY</scope>
    <scope>INTERACTION WITH NOTCH1</scope>
</reference>
<reference key="5">
    <citation type="journal article" date="2012" name="EMBO Rep.">
        <title>Mammalian proapoptotic factor ChaC1 and its homologues function as gamma-glutamyl cyclotransferases acting specifically on glutathione.</title>
        <authorList>
            <person name="Kumar A."/>
            <person name="Tikoo S."/>
            <person name="Maity S."/>
            <person name="Sengupta S."/>
            <person name="Sengupta S."/>
            <person name="Kaur A."/>
            <person name="Bachhawat A.K."/>
        </authorList>
    </citation>
    <scope>FUNCTION</scope>
    <scope>CATALYTIC ACTIVITY</scope>
    <scope>BIOPHYSICOCHEMICAL PROPERTIES</scope>
    <scope>MUTAGENESIS OF GLU-116</scope>
</reference>
<sequence length="223" mass="24547">MKQESASQSTPPPSLSPAPSSAQPSWGDGDPQALWIFGYGSLVWKPDFAYSDSRVGFVRGYSRRFWQGDTFHRGSDKMPGRVVTLLEDREGCTWGVAYQVRGEQVNEALKYLNVREAVLGGYDTKEVTFYPQDTPDQPLTALAYVATPQNPGYLGPAPEEVIATQILACRGFSGHNLEYLLRLADFMQLCGPQAQDEHLEAIVDAVGTLLPCSYLPEQPLALT</sequence>
<proteinExistence type="evidence at protein level"/>
<gene>
    <name evidence="2" type="primary">Chac1</name>
    <name evidence="6" type="synonym">Botch</name>
</gene>
<evidence type="ECO:0000250" key="1">
    <source>
        <dbReference type="UniProtKB" id="O75223"/>
    </source>
</evidence>
<evidence type="ECO:0000250" key="2">
    <source>
        <dbReference type="UniProtKB" id="Q9BUX1"/>
    </source>
</evidence>
<evidence type="ECO:0000256" key="3">
    <source>
        <dbReference type="SAM" id="MobiDB-lite"/>
    </source>
</evidence>
<evidence type="ECO:0000269" key="4">
    <source>
    </source>
</evidence>
<evidence type="ECO:0000269" key="5">
    <source>
    </source>
</evidence>
<evidence type="ECO:0000303" key="6">
    <source>
    </source>
</evidence>
<evidence type="ECO:0000303" key="7">
    <source>
    </source>
</evidence>
<evidence type="ECO:0000305" key="8"/>
<feature type="chain" id="PRO_0000239011" description="Glutathione-specific gamma-glutamylcyclotransferase 1">
    <location>
        <begin position="1"/>
        <end position="223"/>
    </location>
</feature>
<feature type="region of interest" description="Disordered" evidence="3">
    <location>
        <begin position="1"/>
        <end position="26"/>
    </location>
</feature>
<feature type="active site" description="Proton acceptor" evidence="1">
    <location>
        <position position="116"/>
    </location>
</feature>
<feature type="binding site" evidence="1">
    <location>
        <begin position="36"/>
        <end position="41"/>
    </location>
    <ligand>
        <name>substrate</name>
    </ligand>
</feature>
<feature type="mutagenesis site" description="Loss of catalytic activity against glutathione." evidence="5">
    <original>E</original>
    <variation>Q</variation>
    <location>
        <position position="116"/>
    </location>
</feature>
<feature type="sequence conflict" description="In Ref. 3; AAH25169." evidence="8" ref="3">
    <original>S</original>
    <variation>F</variation>
    <location>
        <position position="25"/>
    </location>
</feature>
<feature type="sequence conflict" description="In Ref. 3; AAH25169." evidence="8" ref="3">
    <original>R</original>
    <variation>H</variation>
    <location>
        <position position="89"/>
    </location>
</feature>
<name>CHAC1_MOUSE</name>
<organism>
    <name type="scientific">Mus musculus</name>
    <name type="common">Mouse</name>
    <dbReference type="NCBI Taxonomy" id="10090"/>
    <lineage>
        <taxon>Eukaryota</taxon>
        <taxon>Metazoa</taxon>
        <taxon>Chordata</taxon>
        <taxon>Craniata</taxon>
        <taxon>Vertebrata</taxon>
        <taxon>Euteleostomi</taxon>
        <taxon>Mammalia</taxon>
        <taxon>Eutheria</taxon>
        <taxon>Euarchontoglires</taxon>
        <taxon>Glires</taxon>
        <taxon>Rodentia</taxon>
        <taxon>Myomorpha</taxon>
        <taxon>Muroidea</taxon>
        <taxon>Muridae</taxon>
        <taxon>Murinae</taxon>
        <taxon>Mus</taxon>
        <taxon>Mus</taxon>
    </lineage>
</organism>
<dbReference type="EC" id="4.3.2.7" evidence="5"/>
<dbReference type="EMBL" id="AK007378">
    <property type="protein sequence ID" value="BAB24997.1"/>
    <property type="molecule type" value="mRNA"/>
</dbReference>
<dbReference type="EMBL" id="AK032218">
    <property type="protein sequence ID" value="BAC27764.1"/>
    <property type="molecule type" value="mRNA"/>
</dbReference>
<dbReference type="EMBL" id="AL929318">
    <property type="status" value="NOT_ANNOTATED_CDS"/>
    <property type="molecule type" value="Genomic_DNA"/>
</dbReference>
<dbReference type="EMBL" id="BC025169">
    <property type="protein sequence ID" value="AAH25169.1"/>
    <property type="molecule type" value="mRNA"/>
</dbReference>
<dbReference type="CCDS" id="CCDS16601.1"/>
<dbReference type="RefSeq" id="NP_081205.1">
    <property type="nucleotide sequence ID" value="NM_026929.4"/>
</dbReference>
<dbReference type="SMR" id="Q8R3J5"/>
<dbReference type="FunCoup" id="Q8R3J5">
    <property type="interactions" value="924"/>
</dbReference>
<dbReference type="STRING" id="10090.ENSMUSP00000028780"/>
<dbReference type="PhosphoSitePlus" id="Q8R3J5"/>
<dbReference type="PaxDb" id="10090-ENSMUSP00000028780"/>
<dbReference type="ProteomicsDB" id="283903"/>
<dbReference type="ABCD" id="Q8R3J5">
    <property type="antibodies" value="1 sequenced antibody"/>
</dbReference>
<dbReference type="Antibodypedia" id="23207">
    <property type="antibodies" value="311 antibodies from 28 providers"/>
</dbReference>
<dbReference type="DNASU" id="69065"/>
<dbReference type="Ensembl" id="ENSMUST00000028780.4">
    <property type="protein sequence ID" value="ENSMUSP00000028780.4"/>
    <property type="gene ID" value="ENSMUSG00000027313.4"/>
</dbReference>
<dbReference type="GeneID" id="69065"/>
<dbReference type="KEGG" id="mmu:69065"/>
<dbReference type="UCSC" id="uc008lts.3">
    <property type="organism name" value="mouse"/>
</dbReference>
<dbReference type="AGR" id="MGI:1916315"/>
<dbReference type="CTD" id="79094"/>
<dbReference type="MGI" id="MGI:1916315">
    <property type="gene designation" value="Chac1"/>
</dbReference>
<dbReference type="VEuPathDB" id="HostDB:ENSMUSG00000027313"/>
<dbReference type="eggNOG" id="KOG3182">
    <property type="taxonomic scope" value="Eukaryota"/>
</dbReference>
<dbReference type="GeneTree" id="ENSGT00390000003855"/>
<dbReference type="HOGENOM" id="CLU_070703_2_2_1"/>
<dbReference type="InParanoid" id="Q8R3J5"/>
<dbReference type="OMA" id="HRALKMW"/>
<dbReference type="OrthoDB" id="1933483at2759"/>
<dbReference type="PhylomeDB" id="Q8R3J5"/>
<dbReference type="TreeFam" id="TF313048"/>
<dbReference type="BRENDA" id="4.3.2.7">
    <property type="organism ID" value="3474"/>
</dbReference>
<dbReference type="Reactome" id="R-MMU-174403">
    <property type="pathway name" value="Glutathione synthesis and recycling"/>
</dbReference>
<dbReference type="SABIO-RK" id="Q8R3J5"/>
<dbReference type="BioGRID-ORCS" id="69065">
    <property type="hits" value="3 hits in 79 CRISPR screens"/>
</dbReference>
<dbReference type="PRO" id="PR:Q8R3J5"/>
<dbReference type="Proteomes" id="UP000000589">
    <property type="component" value="Chromosome 2"/>
</dbReference>
<dbReference type="RNAct" id="Q8R3J5">
    <property type="molecule type" value="protein"/>
</dbReference>
<dbReference type="Bgee" id="ENSMUSG00000027313">
    <property type="expression patterns" value="Expressed in vault of skull and 146 other cell types or tissues"/>
</dbReference>
<dbReference type="GO" id="GO:0005829">
    <property type="term" value="C:cytosol"/>
    <property type="evidence" value="ECO:0000250"/>
    <property type="project" value="UniProtKB"/>
</dbReference>
<dbReference type="GO" id="GO:0005802">
    <property type="term" value="C:trans-Golgi network"/>
    <property type="evidence" value="ECO:0000314"/>
    <property type="project" value="UniProtKB"/>
</dbReference>
<dbReference type="GO" id="GO:0061928">
    <property type="term" value="F:glutathione specific gamma-glutamylcyclotransferase activity"/>
    <property type="evidence" value="ECO:0007669"/>
    <property type="project" value="UniProtKB-EC"/>
</dbReference>
<dbReference type="GO" id="GO:0005112">
    <property type="term" value="F:Notch binding"/>
    <property type="evidence" value="ECO:0000314"/>
    <property type="project" value="UniProtKB"/>
</dbReference>
<dbReference type="GO" id="GO:0006751">
    <property type="term" value="P:glutathione catabolic process"/>
    <property type="evidence" value="ECO:0007669"/>
    <property type="project" value="InterPro"/>
</dbReference>
<dbReference type="GO" id="GO:0070059">
    <property type="term" value="P:intrinsic apoptotic signaling pathway in response to endoplasmic reticulum stress"/>
    <property type="evidence" value="ECO:0000250"/>
    <property type="project" value="UniProtKB"/>
</dbReference>
<dbReference type="GO" id="GO:0045746">
    <property type="term" value="P:negative regulation of Notch signaling pathway"/>
    <property type="evidence" value="ECO:0000250"/>
    <property type="project" value="UniProtKB"/>
</dbReference>
<dbReference type="GO" id="GO:0010955">
    <property type="term" value="P:negative regulation of protein processing"/>
    <property type="evidence" value="ECO:0000250"/>
    <property type="project" value="UniProtKB"/>
</dbReference>
<dbReference type="GO" id="GO:0022008">
    <property type="term" value="P:neurogenesis"/>
    <property type="evidence" value="ECO:0000315"/>
    <property type="project" value="UniProtKB"/>
</dbReference>
<dbReference type="GO" id="GO:0007219">
    <property type="term" value="P:Notch signaling pathway"/>
    <property type="evidence" value="ECO:0007669"/>
    <property type="project" value="UniProtKB-KW"/>
</dbReference>
<dbReference type="GO" id="GO:0061771">
    <property type="term" value="P:response to caloric restriction"/>
    <property type="evidence" value="ECO:0000314"/>
    <property type="project" value="MGI"/>
</dbReference>
<dbReference type="GO" id="GO:0006986">
    <property type="term" value="P:response to unfolded protein"/>
    <property type="evidence" value="ECO:0007669"/>
    <property type="project" value="UniProtKB-KW"/>
</dbReference>
<dbReference type="CDD" id="cd06661">
    <property type="entry name" value="GGCT_like"/>
    <property type="match status" value="1"/>
</dbReference>
<dbReference type="FunFam" id="3.10.490.10:FF:000005">
    <property type="entry name" value="Gamma-glutamylcyclotransferase"/>
    <property type="match status" value="1"/>
</dbReference>
<dbReference type="Gene3D" id="3.10.490.10">
    <property type="entry name" value="Gamma-glutamyl cyclotransferase-like"/>
    <property type="match status" value="1"/>
</dbReference>
<dbReference type="InterPro" id="IPR006840">
    <property type="entry name" value="ChaC"/>
</dbReference>
<dbReference type="InterPro" id="IPR013024">
    <property type="entry name" value="GGCT-like"/>
</dbReference>
<dbReference type="InterPro" id="IPR036568">
    <property type="entry name" value="GGCT-like_sf"/>
</dbReference>
<dbReference type="PANTHER" id="PTHR12192">
    <property type="entry name" value="CATION TRANSPORT PROTEIN CHAC-RELATED"/>
    <property type="match status" value="1"/>
</dbReference>
<dbReference type="PANTHER" id="PTHR12192:SF26">
    <property type="entry name" value="GLUTATHIONE-SPECIFIC GAMMA-GLUTAMYLCYCLOTRANSFERASE 1"/>
    <property type="match status" value="1"/>
</dbReference>
<dbReference type="Pfam" id="PF04752">
    <property type="entry name" value="ChaC"/>
    <property type="match status" value="1"/>
</dbReference>
<dbReference type="SUPFAM" id="SSF110857">
    <property type="entry name" value="Gamma-glutamyl cyclotransferase-like"/>
    <property type="match status" value="1"/>
</dbReference>
<accession>Q8R3J5</accession>
<accession>A2AV63</accession>
<accession>Q9D944</accession>
<keyword id="KW-0053">Apoptosis</keyword>
<keyword id="KW-0963">Cytoplasm</keyword>
<keyword id="KW-0333">Golgi apparatus</keyword>
<keyword id="KW-0456">Lyase</keyword>
<keyword id="KW-0524">Neurogenesis</keyword>
<keyword id="KW-0914">Notch signaling pathway</keyword>
<keyword id="KW-1185">Reference proteome</keyword>
<keyword id="KW-0834">Unfolded protein response</keyword>
<protein>
    <recommendedName>
        <fullName evidence="7">Glutathione-specific gamma-glutamylcyclotransferase 1</fullName>
        <shortName evidence="7">Gamma-GCG 1</shortName>
        <ecNumber evidence="5">4.3.2.7</ecNumber>
    </recommendedName>
    <alternativeName>
        <fullName evidence="6">Blocks Notch protein</fullName>
        <shortName evidence="6">Botch</shortName>
    </alternativeName>
    <alternativeName>
        <fullName evidence="2">Cation transport regulator-like protein 1</fullName>
    </alternativeName>
</protein>